<sequence>MPTHAPAPGSGDPLGLHGVVPPVVTAFDADESLDADTTADHARMVVDAGVHGVFPLGTNGEFPLLTPSERDRVVTAVVDEVGGEVPVIAGVGAPSTRQTVAHAEHAASVGADGVVVVTPFYYPLDGTAAVEHYRRVAAAVDCPVYVYHIPSKTGNELSLETLAALAEIDTLAGVKDSSKDVPWLGQAVDAHPELTFLAGSDSLLAPGLDVGCAGLVSAVANVAPELVVGLYEAYDEGDRERARARQSTVYEVRAALKRGPYMAGVKAALGLRGFDAGPLRSPLRGLDDDDRAALEADLADLGLL</sequence>
<dbReference type="EC" id="4.-.-.-"/>
<dbReference type="EMBL" id="AM774415">
    <property type="protein sequence ID" value="CAP13250.1"/>
    <property type="molecule type" value="Genomic_DNA"/>
</dbReference>
<dbReference type="RefSeq" id="WP_012289156.1">
    <property type="nucleotide sequence ID" value="NC_010364.1"/>
</dbReference>
<dbReference type="SMR" id="B0R3D6"/>
<dbReference type="EnsemblBacteria" id="CAP13250">
    <property type="protein sequence ID" value="CAP13250"/>
    <property type="gene ID" value="OE_1665R"/>
</dbReference>
<dbReference type="KEGG" id="hsl:OE_1665R"/>
<dbReference type="HOGENOM" id="CLU_049343_5_1_2"/>
<dbReference type="PhylomeDB" id="B0R3D6"/>
<dbReference type="Proteomes" id="UP000001321">
    <property type="component" value="Chromosome"/>
</dbReference>
<dbReference type="GO" id="GO:0005737">
    <property type="term" value="C:cytoplasm"/>
    <property type="evidence" value="ECO:0007669"/>
    <property type="project" value="UniProtKB-SubCell"/>
</dbReference>
<dbReference type="GO" id="GO:0008675">
    <property type="term" value="F:2-dehydro-3-deoxy-phosphogluconate aldolase activity"/>
    <property type="evidence" value="ECO:0007669"/>
    <property type="project" value="UniProtKB-ARBA"/>
</dbReference>
<dbReference type="GO" id="GO:0008840">
    <property type="term" value="F:4-hydroxy-tetrahydrodipicolinate synthase activity"/>
    <property type="evidence" value="ECO:0007669"/>
    <property type="project" value="TreeGrafter"/>
</dbReference>
<dbReference type="GO" id="GO:0044281">
    <property type="term" value="P:small molecule metabolic process"/>
    <property type="evidence" value="ECO:0007669"/>
    <property type="project" value="UniProtKB-ARBA"/>
</dbReference>
<dbReference type="CDD" id="cd00408">
    <property type="entry name" value="DHDPS-like"/>
    <property type="match status" value="1"/>
</dbReference>
<dbReference type="Gene3D" id="3.20.20.70">
    <property type="entry name" value="Aldolase class I"/>
    <property type="match status" value="1"/>
</dbReference>
<dbReference type="InterPro" id="IPR013785">
    <property type="entry name" value="Aldolase_TIM"/>
</dbReference>
<dbReference type="InterPro" id="IPR002220">
    <property type="entry name" value="DapA-like"/>
</dbReference>
<dbReference type="InterPro" id="IPR020625">
    <property type="entry name" value="Schiff_base-form_aldolases_AS"/>
</dbReference>
<dbReference type="PANTHER" id="PTHR12128:SF66">
    <property type="entry name" value="4-HYDROXY-2-OXOGLUTARATE ALDOLASE, MITOCHONDRIAL"/>
    <property type="match status" value="1"/>
</dbReference>
<dbReference type="PANTHER" id="PTHR12128">
    <property type="entry name" value="DIHYDRODIPICOLINATE SYNTHASE"/>
    <property type="match status" value="1"/>
</dbReference>
<dbReference type="Pfam" id="PF00701">
    <property type="entry name" value="DHDPS"/>
    <property type="match status" value="1"/>
</dbReference>
<dbReference type="PIRSF" id="PIRSF001365">
    <property type="entry name" value="DHDPS"/>
    <property type="match status" value="1"/>
</dbReference>
<dbReference type="PRINTS" id="PR00146">
    <property type="entry name" value="DHPICSNTHASE"/>
</dbReference>
<dbReference type="SMART" id="SM01130">
    <property type="entry name" value="DHDPS"/>
    <property type="match status" value="1"/>
</dbReference>
<dbReference type="SUPFAM" id="SSF51569">
    <property type="entry name" value="Aldolase"/>
    <property type="match status" value="1"/>
</dbReference>
<dbReference type="PROSITE" id="PS00666">
    <property type="entry name" value="DHDPS_2"/>
    <property type="match status" value="1"/>
</dbReference>
<organism>
    <name type="scientific">Halobacterium salinarum (strain ATCC 29341 / DSM 671 / R1)</name>
    <dbReference type="NCBI Taxonomy" id="478009"/>
    <lineage>
        <taxon>Archaea</taxon>
        <taxon>Methanobacteriati</taxon>
        <taxon>Methanobacteriota</taxon>
        <taxon>Stenosarchaea group</taxon>
        <taxon>Halobacteria</taxon>
        <taxon>Halobacteriales</taxon>
        <taxon>Halobacteriaceae</taxon>
        <taxon>Halobacterium</taxon>
        <taxon>Halobacterium salinarum NRC-34001</taxon>
    </lineage>
</organism>
<protein>
    <recommendedName>
        <fullName>Uncharacterized DapA-like lyase OE_1665R</fullName>
        <ecNumber>4.-.-.-</ecNumber>
    </recommendedName>
</protein>
<gene>
    <name type="primary">dapAL</name>
    <name type="ordered locus">OE_1665R</name>
</gene>
<name>DAPAL_HALS3</name>
<accession>B0R3D6</accession>
<proteinExistence type="inferred from homology"/>
<evidence type="ECO:0000250" key="1"/>
<evidence type="ECO:0000305" key="2"/>
<comment type="subunit">
    <text evidence="1">Homotetramer.</text>
</comment>
<comment type="subcellular location">
    <subcellularLocation>
        <location evidence="2">Cytoplasm</location>
    </subcellularLocation>
</comment>
<comment type="similarity">
    <text evidence="2">Belongs to the DapA family.</text>
</comment>
<feature type="chain" id="PRO_1000124038" description="Uncharacterized DapA-like lyase OE_1665R">
    <location>
        <begin position="1"/>
        <end position="304"/>
    </location>
</feature>
<feature type="active site" description="Charge relay system" evidence="1">
    <location>
        <position position="58"/>
    </location>
</feature>
<feature type="active site" description="Charge relay system" evidence="1">
    <location>
        <position position="121"/>
    </location>
</feature>
<feature type="active site" description="Proton donor" evidence="1">
    <location>
        <position position="147"/>
    </location>
</feature>
<feature type="active site" description="Schiff-base intermediate with substrate" evidence="1">
    <location>
        <position position="175"/>
    </location>
</feature>
<keyword id="KW-0963">Cytoplasm</keyword>
<keyword id="KW-0456">Lyase</keyword>
<keyword id="KW-0704">Schiff base</keyword>
<reference key="1">
    <citation type="journal article" date="2008" name="Genomics">
        <title>Evolution in the laboratory: the genome of Halobacterium salinarum strain R1 compared to that of strain NRC-1.</title>
        <authorList>
            <person name="Pfeiffer F."/>
            <person name="Schuster S.C."/>
            <person name="Broicher A."/>
            <person name="Falb M."/>
            <person name="Palm P."/>
            <person name="Rodewald K."/>
            <person name="Ruepp A."/>
            <person name="Soppa J."/>
            <person name="Tittor J."/>
            <person name="Oesterhelt D."/>
        </authorList>
    </citation>
    <scope>NUCLEOTIDE SEQUENCE [LARGE SCALE GENOMIC DNA]</scope>
    <source>
        <strain>ATCC 29341 / DSM 671 / R1</strain>
    </source>
</reference>